<accession>Q2NCY7</accession>
<dbReference type="EC" id="6.3.2.4" evidence="2"/>
<dbReference type="EMBL" id="CP000157">
    <property type="protein sequence ID" value="ABC62454.1"/>
    <property type="molecule type" value="Genomic_DNA"/>
</dbReference>
<dbReference type="RefSeq" id="WP_011413330.1">
    <property type="nucleotide sequence ID" value="NC_007722.1"/>
</dbReference>
<dbReference type="SMR" id="Q2NCY7"/>
<dbReference type="STRING" id="314225.ELI_01810"/>
<dbReference type="KEGG" id="eli:ELI_01810"/>
<dbReference type="eggNOG" id="COG1181">
    <property type="taxonomic scope" value="Bacteria"/>
</dbReference>
<dbReference type="HOGENOM" id="CLU_039268_1_1_5"/>
<dbReference type="OrthoDB" id="9813261at2"/>
<dbReference type="UniPathway" id="UPA00219"/>
<dbReference type="Proteomes" id="UP000008808">
    <property type="component" value="Chromosome"/>
</dbReference>
<dbReference type="GO" id="GO:0005737">
    <property type="term" value="C:cytoplasm"/>
    <property type="evidence" value="ECO:0007669"/>
    <property type="project" value="UniProtKB-SubCell"/>
</dbReference>
<dbReference type="GO" id="GO:0005524">
    <property type="term" value="F:ATP binding"/>
    <property type="evidence" value="ECO:0007669"/>
    <property type="project" value="UniProtKB-KW"/>
</dbReference>
<dbReference type="GO" id="GO:0008716">
    <property type="term" value="F:D-alanine-D-alanine ligase activity"/>
    <property type="evidence" value="ECO:0007669"/>
    <property type="project" value="UniProtKB-UniRule"/>
</dbReference>
<dbReference type="GO" id="GO:0046872">
    <property type="term" value="F:metal ion binding"/>
    <property type="evidence" value="ECO:0007669"/>
    <property type="project" value="UniProtKB-KW"/>
</dbReference>
<dbReference type="GO" id="GO:0071555">
    <property type="term" value="P:cell wall organization"/>
    <property type="evidence" value="ECO:0007669"/>
    <property type="project" value="UniProtKB-KW"/>
</dbReference>
<dbReference type="GO" id="GO:0009252">
    <property type="term" value="P:peptidoglycan biosynthetic process"/>
    <property type="evidence" value="ECO:0007669"/>
    <property type="project" value="UniProtKB-UniRule"/>
</dbReference>
<dbReference type="GO" id="GO:0008360">
    <property type="term" value="P:regulation of cell shape"/>
    <property type="evidence" value="ECO:0007669"/>
    <property type="project" value="UniProtKB-KW"/>
</dbReference>
<dbReference type="Gene3D" id="3.40.50.20">
    <property type="match status" value="1"/>
</dbReference>
<dbReference type="Gene3D" id="3.30.1490.20">
    <property type="entry name" value="ATP-grasp fold, A domain"/>
    <property type="match status" value="1"/>
</dbReference>
<dbReference type="Gene3D" id="3.30.470.20">
    <property type="entry name" value="ATP-grasp fold, B domain"/>
    <property type="match status" value="1"/>
</dbReference>
<dbReference type="HAMAP" id="MF_00047">
    <property type="entry name" value="Dala_Dala_lig"/>
    <property type="match status" value="1"/>
</dbReference>
<dbReference type="InterPro" id="IPR011761">
    <property type="entry name" value="ATP-grasp"/>
</dbReference>
<dbReference type="InterPro" id="IPR013815">
    <property type="entry name" value="ATP_grasp_subdomain_1"/>
</dbReference>
<dbReference type="InterPro" id="IPR000291">
    <property type="entry name" value="D-Ala_lig_Van_CS"/>
</dbReference>
<dbReference type="InterPro" id="IPR005905">
    <property type="entry name" value="D_ala_D_ala"/>
</dbReference>
<dbReference type="InterPro" id="IPR011095">
    <property type="entry name" value="Dala_Dala_lig_C"/>
</dbReference>
<dbReference type="InterPro" id="IPR011127">
    <property type="entry name" value="Dala_Dala_lig_N"/>
</dbReference>
<dbReference type="InterPro" id="IPR016185">
    <property type="entry name" value="PreATP-grasp_dom_sf"/>
</dbReference>
<dbReference type="NCBIfam" id="TIGR01205">
    <property type="entry name" value="D_ala_D_alaTIGR"/>
    <property type="match status" value="1"/>
</dbReference>
<dbReference type="NCBIfam" id="NF002378">
    <property type="entry name" value="PRK01372.1"/>
    <property type="match status" value="1"/>
</dbReference>
<dbReference type="PANTHER" id="PTHR23132">
    <property type="entry name" value="D-ALANINE--D-ALANINE LIGASE"/>
    <property type="match status" value="1"/>
</dbReference>
<dbReference type="PANTHER" id="PTHR23132:SF23">
    <property type="entry name" value="D-ALANINE--D-ALANINE LIGASE B"/>
    <property type="match status" value="1"/>
</dbReference>
<dbReference type="Pfam" id="PF07478">
    <property type="entry name" value="Dala_Dala_lig_C"/>
    <property type="match status" value="1"/>
</dbReference>
<dbReference type="Pfam" id="PF01820">
    <property type="entry name" value="Dala_Dala_lig_N"/>
    <property type="match status" value="1"/>
</dbReference>
<dbReference type="PIRSF" id="PIRSF039102">
    <property type="entry name" value="Ddl/VanB"/>
    <property type="match status" value="1"/>
</dbReference>
<dbReference type="SUPFAM" id="SSF56059">
    <property type="entry name" value="Glutathione synthetase ATP-binding domain-like"/>
    <property type="match status" value="1"/>
</dbReference>
<dbReference type="SUPFAM" id="SSF52440">
    <property type="entry name" value="PreATP-grasp domain"/>
    <property type="match status" value="1"/>
</dbReference>
<dbReference type="PROSITE" id="PS50975">
    <property type="entry name" value="ATP_GRASP"/>
    <property type="match status" value="1"/>
</dbReference>
<dbReference type="PROSITE" id="PS00843">
    <property type="entry name" value="DALA_DALA_LIGASE_1"/>
    <property type="match status" value="1"/>
</dbReference>
<dbReference type="PROSITE" id="PS00844">
    <property type="entry name" value="DALA_DALA_LIGASE_2"/>
    <property type="match status" value="1"/>
</dbReference>
<proteinExistence type="inferred from homology"/>
<reference key="1">
    <citation type="journal article" date="2009" name="J. Bacteriol.">
        <title>Complete genome sequence of Erythrobacter litoralis HTCC2594.</title>
        <authorList>
            <person name="Oh H.M."/>
            <person name="Giovannoni S.J."/>
            <person name="Ferriera S."/>
            <person name="Johnson J."/>
            <person name="Cho J.C."/>
        </authorList>
    </citation>
    <scope>NUCLEOTIDE SEQUENCE [LARGE SCALE GENOMIC DNA]</scope>
    <source>
        <strain>HTCC2594</strain>
    </source>
</reference>
<comment type="function">
    <text evidence="2">Cell wall formation.</text>
</comment>
<comment type="catalytic activity">
    <reaction evidence="2">
        <text>2 D-alanine + ATP = D-alanyl-D-alanine + ADP + phosphate + H(+)</text>
        <dbReference type="Rhea" id="RHEA:11224"/>
        <dbReference type="ChEBI" id="CHEBI:15378"/>
        <dbReference type="ChEBI" id="CHEBI:30616"/>
        <dbReference type="ChEBI" id="CHEBI:43474"/>
        <dbReference type="ChEBI" id="CHEBI:57416"/>
        <dbReference type="ChEBI" id="CHEBI:57822"/>
        <dbReference type="ChEBI" id="CHEBI:456216"/>
        <dbReference type="EC" id="6.3.2.4"/>
    </reaction>
</comment>
<comment type="cofactor">
    <cofactor evidence="1">
        <name>Mg(2+)</name>
        <dbReference type="ChEBI" id="CHEBI:18420"/>
    </cofactor>
    <cofactor evidence="1">
        <name>Mn(2+)</name>
        <dbReference type="ChEBI" id="CHEBI:29035"/>
    </cofactor>
    <text evidence="1">Binds 2 magnesium or manganese ions per subunit.</text>
</comment>
<comment type="pathway">
    <text evidence="2">Cell wall biogenesis; peptidoglycan biosynthesis.</text>
</comment>
<comment type="subcellular location">
    <subcellularLocation>
        <location evidence="2">Cytoplasm</location>
    </subcellularLocation>
</comment>
<comment type="similarity">
    <text evidence="2">Belongs to the D-alanine--D-alanine ligase family.</text>
</comment>
<gene>
    <name evidence="2" type="primary">ddl</name>
    <name type="ordered locus">ELI_01810</name>
</gene>
<keyword id="KW-0067">ATP-binding</keyword>
<keyword id="KW-0133">Cell shape</keyword>
<keyword id="KW-0961">Cell wall biogenesis/degradation</keyword>
<keyword id="KW-0963">Cytoplasm</keyword>
<keyword id="KW-0436">Ligase</keyword>
<keyword id="KW-0460">Magnesium</keyword>
<keyword id="KW-0464">Manganese</keyword>
<keyword id="KW-0479">Metal-binding</keyword>
<keyword id="KW-0547">Nucleotide-binding</keyword>
<keyword id="KW-0573">Peptidoglycan synthesis</keyword>
<keyword id="KW-1185">Reference proteome</keyword>
<evidence type="ECO:0000250" key="1"/>
<evidence type="ECO:0000255" key="2">
    <source>
        <dbReference type="HAMAP-Rule" id="MF_00047"/>
    </source>
</evidence>
<protein>
    <recommendedName>
        <fullName evidence="2">D-alanine--D-alanine ligase</fullName>
        <ecNumber evidence="2">6.3.2.4</ecNumber>
    </recommendedName>
    <alternativeName>
        <fullName evidence="2">D-Ala-D-Ala ligase</fullName>
    </alternativeName>
    <alternativeName>
        <fullName evidence="2">D-alanylalanine synthetase</fullName>
    </alternativeName>
</protein>
<name>DDL_ERYLH</name>
<sequence>MSLDRKLHVVVLMGGWANEREVSLMSGEGVAKALEKRGHTVTRIDMDRQVAAKIAEAAPDVVFNALHGVPGEDGTVQGMLDLMGVPYTHSGLATSVIAIDKELTKQQLVPRGIPMPGGRIVQSEDLYQQDPLARPYVLKPVNEGSSVGVAIVTDESNYGNPIRRDAPGPWQEFRELLAEPFIRGRELTTAVVGGQALAVTELKPKSGFYDFDAKYTDGMTEHVCPADIPPEIEALCKKYALEAHRILGCRGTSRTDYRWDDEQGDDGLFVLETNTQPGMTPLSLVPEQAAYAGMSYEDLVEAIVEAALEHFAAKTGGNDGDQG</sequence>
<organism>
    <name type="scientific">Erythrobacter litoralis (strain HTCC2594)</name>
    <dbReference type="NCBI Taxonomy" id="314225"/>
    <lineage>
        <taxon>Bacteria</taxon>
        <taxon>Pseudomonadati</taxon>
        <taxon>Pseudomonadota</taxon>
        <taxon>Alphaproteobacteria</taxon>
        <taxon>Sphingomonadales</taxon>
        <taxon>Erythrobacteraceae</taxon>
        <taxon>Erythrobacter/Porphyrobacter group</taxon>
        <taxon>Erythrobacter</taxon>
    </lineage>
</organism>
<feature type="chain" id="PRO_0000341090" description="D-alanine--D-alanine ligase">
    <location>
        <begin position="1"/>
        <end position="323"/>
    </location>
</feature>
<feature type="domain" description="ATP-grasp" evidence="2">
    <location>
        <begin position="105"/>
        <end position="305"/>
    </location>
</feature>
<feature type="binding site" evidence="2">
    <location>
        <begin position="131"/>
        <end position="188"/>
    </location>
    <ligand>
        <name>ATP</name>
        <dbReference type="ChEBI" id="CHEBI:30616"/>
    </ligand>
</feature>
<feature type="binding site" evidence="2">
    <location>
        <position position="256"/>
    </location>
    <ligand>
        <name>Mg(2+)</name>
        <dbReference type="ChEBI" id="CHEBI:18420"/>
        <label>1</label>
    </ligand>
</feature>
<feature type="binding site" evidence="2">
    <location>
        <position position="272"/>
    </location>
    <ligand>
        <name>Mg(2+)</name>
        <dbReference type="ChEBI" id="CHEBI:18420"/>
        <label>1</label>
    </ligand>
</feature>
<feature type="binding site" evidence="2">
    <location>
        <position position="272"/>
    </location>
    <ligand>
        <name>Mg(2+)</name>
        <dbReference type="ChEBI" id="CHEBI:18420"/>
        <label>2</label>
    </ligand>
</feature>
<feature type="binding site" evidence="2">
    <location>
        <position position="274"/>
    </location>
    <ligand>
        <name>Mg(2+)</name>
        <dbReference type="ChEBI" id="CHEBI:18420"/>
        <label>2</label>
    </ligand>
</feature>